<protein>
    <recommendedName>
        <fullName evidence="5">Epi-neemfruitin B synthase L1AT</fullName>
        <ecNumber evidence="2">2.1.1.-</ecNumber>
    </recommendedName>
    <alternativeName>
        <fullName evidence="3">Limonoid 1-O-acetyltransferse-like</fullName>
        <shortName evidence="3">MaL1AT</shortName>
    </alternativeName>
</protein>
<dbReference type="EC" id="2.1.1.-" evidence="2"/>
<dbReference type="EMBL" id="OP947600">
    <property type="protein sequence ID" value="WBW48725.1"/>
    <property type="molecule type" value="mRNA"/>
</dbReference>
<dbReference type="SMR" id="P0DXH5"/>
<dbReference type="UniPathway" id="UPA00213"/>
<dbReference type="GO" id="GO:0016746">
    <property type="term" value="F:acyltransferase activity"/>
    <property type="evidence" value="ECO:0007669"/>
    <property type="project" value="UniProtKB-KW"/>
</dbReference>
<dbReference type="GO" id="GO:0016491">
    <property type="term" value="F:oxidoreductase activity"/>
    <property type="evidence" value="ECO:0007669"/>
    <property type="project" value="UniProtKB-KW"/>
</dbReference>
<dbReference type="Gene3D" id="3.30.559.10">
    <property type="entry name" value="Chloramphenicol acetyltransferase-like domain"/>
    <property type="match status" value="2"/>
</dbReference>
<dbReference type="InterPro" id="IPR023213">
    <property type="entry name" value="CAT-like_dom_sf"/>
</dbReference>
<dbReference type="PANTHER" id="PTHR31623:SF28">
    <property type="entry name" value="BAHD ACYLTRANSFERASE"/>
    <property type="match status" value="1"/>
</dbReference>
<dbReference type="PANTHER" id="PTHR31623">
    <property type="entry name" value="F21J9.9"/>
    <property type="match status" value="1"/>
</dbReference>
<dbReference type="Pfam" id="PF02458">
    <property type="entry name" value="Transferase"/>
    <property type="match status" value="1"/>
</dbReference>
<organism>
    <name type="scientific">Melia azedarach</name>
    <name type="common">Chinaberry tree</name>
    <dbReference type="NCBI Taxonomy" id="155640"/>
    <lineage>
        <taxon>Eukaryota</taxon>
        <taxon>Viridiplantae</taxon>
        <taxon>Streptophyta</taxon>
        <taxon>Embryophyta</taxon>
        <taxon>Tracheophyta</taxon>
        <taxon>Spermatophyta</taxon>
        <taxon>Magnoliopsida</taxon>
        <taxon>eudicotyledons</taxon>
        <taxon>Gunneridae</taxon>
        <taxon>Pentapetalae</taxon>
        <taxon>rosids</taxon>
        <taxon>malvids</taxon>
        <taxon>Sapindales</taxon>
        <taxon>Meliaceae</taxon>
        <taxon>Melia</taxon>
    </lineage>
</organism>
<proteinExistence type="evidence at protein level"/>
<gene>
    <name evidence="3" type="primary">L1AT</name>
</gene>
<reference key="1">
    <citation type="journal article" date="2023" name="Science">
        <title>Complex scaffold remodeling in plant triterpene biosynthesis.</title>
        <authorList>
            <person name="De La Pena R."/>
            <person name="Hodgson H."/>
            <person name="Liu J.C."/>
            <person name="Stephenson M.J."/>
            <person name="Martin A.C."/>
            <person name="Owen C."/>
            <person name="Harkess A."/>
            <person name="Leebens-Mack J."/>
            <person name="Jimenez L.E."/>
            <person name="Osbourn A."/>
            <person name="Sattely E.S."/>
        </authorList>
    </citation>
    <scope>NUCLEOTIDE SEQUENCE [MRNA]</scope>
    <scope>FUNCTION</scope>
    <scope>CATALYTIC ACTIVITY</scope>
    <scope>PATHWAY</scope>
    <scope>TISSUE SPECIFICITY</scope>
    <source>
        <strain>cv. Valencia</strain>
    </source>
</reference>
<name>L1AT_MELAZ</name>
<feature type="chain" id="PRO_0000461346" description="Epi-neemfruitin B synthase L1AT">
    <location>
        <begin position="1"/>
        <end position="433"/>
    </location>
</feature>
<feature type="active site" description="Proton acceptor" evidence="1">
    <location>
        <position position="151"/>
    </location>
</feature>
<feature type="active site" description="Proton acceptor" evidence="1">
    <location>
        <position position="372"/>
    </location>
</feature>
<evidence type="ECO:0000250" key="1">
    <source>
        <dbReference type="UniProtKB" id="Q70PR7"/>
    </source>
</evidence>
<evidence type="ECO:0000269" key="2">
    <source>
    </source>
</evidence>
<evidence type="ECO:0000303" key="3">
    <source>
    </source>
</evidence>
<evidence type="ECO:0000305" key="4"/>
<evidence type="ECO:0000305" key="5">
    <source>
    </source>
</evidence>
<accession>P0DXH5</accession>
<comment type="function">
    <text evidence="2">Acetyltransferase involved in the biosynthesis of limonoids triterpene natural products such as azadirachtin, an antifeedant widely used as bioinsecticide, and possessing many medicinal applications including anti-tumoral, anti-malarial, anti-rheumatic, antibacterial, anti-inflammatory, anti-pyretic and diuretic effects (PubMed:36701471). Catalyzes the formation of epi-neemfruitin B from (21S)-21-acetyl-1-hydroxy-apo-melianone (PubMed:36701471).</text>
</comment>
<comment type="catalytic activity">
    <reaction evidence="2">
        <text>(21S)-21-acetyl-1-hydroxy-apo-melianone + acetyl-CoA = epi-neemfruitin B + acetate + CoA + H(+)</text>
        <dbReference type="Rhea" id="RHEA:80327"/>
        <dbReference type="ChEBI" id="CHEBI:15378"/>
        <dbReference type="ChEBI" id="CHEBI:30089"/>
        <dbReference type="ChEBI" id="CHEBI:57287"/>
        <dbReference type="ChEBI" id="CHEBI:57288"/>
        <dbReference type="ChEBI" id="CHEBI:231465"/>
        <dbReference type="ChEBI" id="CHEBI:231467"/>
    </reaction>
    <physiologicalReaction direction="left-to-right" evidence="2">
        <dbReference type="Rhea" id="RHEA:80328"/>
    </physiologicalReaction>
</comment>
<comment type="pathway">
    <text evidence="2">Secondary metabolite biosynthesis; terpenoid biosynthesis.</text>
</comment>
<comment type="subunit">
    <text evidence="1">Monomer.</text>
</comment>
<comment type="tissue specificity">
    <text evidence="2">Mainly expressed in petioles and, to a lower extent, in roots.</text>
</comment>
<comment type="similarity">
    <text evidence="4">Belongs to the plant acyltransferase family.</text>
</comment>
<sequence>MELKIVSSEIIKPSSPTPQHLRTHKLSVLDQVAGDSLFPVILFYPQACSNDTTKTSDHLKKSLSETLSKYHPFAGRFKDAFSIDCDDSGAVFVEACVAGEMSEILKQPKNDLLEELMPYKLNEKPSVPVNLAAKVTYFGCGGMALCVCFSHVIADITTAANFIKSWVAISRGFSTSNDIPDTFFDCSTVFPPQDFSSFSRNAFADNHSQSAEIITKRFTFDGVKLADLKEKIRKESSSGYQPTRVEAVSAVILGGIMSAEKEGEKFNHTNLVPSVSVNLRNRTNPPLPELSIGNIIQAAITKLPIEKRINYSKLTEQLHGSIRSIDDEYLKKFHAVGEFMNNMQNALIALFDPNNRGFTISSWCRRPLYEADFGWGKPIWVSTAMKHKDVAVLLDSNDGKGIEALVALPKKEMDKFEQDPGILAYASVDTSII</sequence>
<keyword id="KW-0012">Acyltransferase</keyword>
<keyword id="KW-0808">Transferase</keyword>